<keyword id="KW-0053">Apoptosis</keyword>
<keyword id="KW-0121">Carboxypeptidase</keyword>
<keyword id="KW-0325">Glycoprotein</keyword>
<keyword id="KW-0333">Golgi apparatus</keyword>
<keyword id="KW-0378">Hydrolase</keyword>
<keyword id="KW-0472">Membrane</keyword>
<keyword id="KW-0597">Phosphoprotein</keyword>
<keyword id="KW-0645">Protease</keyword>
<keyword id="KW-0732">Signal</keyword>
<keyword id="KW-0812">Transmembrane</keyword>
<keyword id="KW-1133">Transmembrane helix</keyword>
<name>KEX1_YEAS2</name>
<proteinExistence type="inferred from homology"/>
<comment type="function">
    <text evidence="1">Protease with a carboxypeptidase B-like function involved in the C-terminal processing of the lysine and arginine residues from the precursors of K1, K2 and K28 killer toxins and a-factor (mating pheromone). Involved in the programmed cell death caused by defective N-glycosylation and also contributes to the active cell death program induced by acetic acid stress or during chronological aging. Promotes cell fusion by proteolytically processing substrates that act in parallel to PRM1 as an alternative fusion machine, as cell wall components, or both (By similarity).</text>
</comment>
<comment type="catalytic activity">
    <reaction>
        <text>Preferential release of a C-terminal arginine or lysine residue.</text>
        <dbReference type="EC" id="3.4.16.6"/>
    </reaction>
</comment>
<comment type="subcellular location">
    <subcellularLocation>
        <location evidence="1">Golgi apparatus</location>
        <location evidence="1">trans-Golgi network membrane</location>
        <topology evidence="1">Single-pass type I membrane protein</topology>
    </subcellularLocation>
</comment>
<comment type="similarity">
    <text evidence="5">Belongs to the peptidase S10 family.</text>
</comment>
<dbReference type="EC" id="3.4.16.6"/>
<dbReference type="EMBL" id="ACFL01000397">
    <property type="protein sequence ID" value="EEU04662.1"/>
    <property type="molecule type" value="Genomic_DNA"/>
</dbReference>
<dbReference type="SMR" id="C7GWZ2"/>
<dbReference type="ESTHER" id="yeast-kex01">
    <property type="family name" value="Carboxypeptidase_S10"/>
</dbReference>
<dbReference type="MEROPS" id="S10.007"/>
<dbReference type="GlyCosmos" id="C7GWZ2">
    <property type="glycosylation" value="3 sites, No reported glycans"/>
</dbReference>
<dbReference type="Proteomes" id="UP000008073">
    <property type="component" value="Unassembled WGS sequence"/>
</dbReference>
<dbReference type="GO" id="GO:0016020">
    <property type="term" value="C:membrane"/>
    <property type="evidence" value="ECO:0007669"/>
    <property type="project" value="UniProtKB-KW"/>
</dbReference>
<dbReference type="GO" id="GO:0005802">
    <property type="term" value="C:trans-Golgi network"/>
    <property type="evidence" value="ECO:0007669"/>
    <property type="project" value="TreeGrafter"/>
</dbReference>
<dbReference type="GO" id="GO:0004185">
    <property type="term" value="F:serine-type carboxypeptidase activity"/>
    <property type="evidence" value="ECO:0007669"/>
    <property type="project" value="UniProtKB-EC"/>
</dbReference>
<dbReference type="GO" id="GO:0006915">
    <property type="term" value="P:apoptotic process"/>
    <property type="evidence" value="ECO:0007669"/>
    <property type="project" value="UniProtKB-KW"/>
</dbReference>
<dbReference type="GO" id="GO:0006508">
    <property type="term" value="P:proteolysis"/>
    <property type="evidence" value="ECO:0007669"/>
    <property type="project" value="UniProtKB-KW"/>
</dbReference>
<dbReference type="FunFam" id="3.40.50.1820:FF:000289">
    <property type="entry name" value="Pheromone-processing carboxypeptidase KEX1"/>
    <property type="match status" value="1"/>
</dbReference>
<dbReference type="Gene3D" id="3.40.50.1820">
    <property type="entry name" value="alpha/beta hydrolase"/>
    <property type="match status" value="1"/>
</dbReference>
<dbReference type="InterPro" id="IPR029058">
    <property type="entry name" value="AB_hydrolase_fold"/>
</dbReference>
<dbReference type="InterPro" id="IPR001563">
    <property type="entry name" value="Peptidase_S10"/>
</dbReference>
<dbReference type="InterPro" id="IPR033124">
    <property type="entry name" value="Ser_caboxypep_his_AS"/>
</dbReference>
<dbReference type="InterPro" id="IPR018202">
    <property type="entry name" value="Ser_caboxypep_ser_AS"/>
</dbReference>
<dbReference type="PANTHER" id="PTHR11802:SF190">
    <property type="entry name" value="PHEROMONE-PROCESSING CARBOXYPEPTIDASE KEX1"/>
    <property type="match status" value="1"/>
</dbReference>
<dbReference type="PANTHER" id="PTHR11802">
    <property type="entry name" value="SERINE PROTEASE FAMILY S10 SERINE CARBOXYPEPTIDASE"/>
    <property type="match status" value="1"/>
</dbReference>
<dbReference type="Pfam" id="PF00450">
    <property type="entry name" value="Peptidase_S10"/>
    <property type="match status" value="1"/>
</dbReference>
<dbReference type="PRINTS" id="PR00724">
    <property type="entry name" value="CRBOXYPTASEC"/>
</dbReference>
<dbReference type="SUPFAM" id="SSF53474">
    <property type="entry name" value="alpha/beta-Hydrolases"/>
    <property type="match status" value="1"/>
</dbReference>
<dbReference type="PROSITE" id="PS00560">
    <property type="entry name" value="CARBOXYPEPT_SER_HIS"/>
    <property type="match status" value="1"/>
</dbReference>
<dbReference type="PROSITE" id="PS00131">
    <property type="entry name" value="CARBOXYPEPT_SER_SER"/>
    <property type="match status" value="1"/>
</dbReference>
<accession>C7GWZ2</accession>
<reference key="1">
    <citation type="journal article" date="2009" name="Genome Res.">
        <title>Genome structure of a Saccharomyces cerevisiae strain widely used in bioethanol production.</title>
        <authorList>
            <person name="Argueso J.L."/>
            <person name="Carazzolle M.F."/>
            <person name="Mieczkowski P.A."/>
            <person name="Duarte F.M."/>
            <person name="Netto O.V.C."/>
            <person name="Missawa S.K."/>
            <person name="Galzerani F."/>
            <person name="Costa G.G.L."/>
            <person name="Vidal R.O."/>
            <person name="Noronha M.F."/>
            <person name="Dominska M."/>
            <person name="Andrietta M.G.S."/>
            <person name="Andrietta S.R."/>
            <person name="Cunha A.F."/>
            <person name="Gomes L.H."/>
            <person name="Tavares F.C.A."/>
            <person name="Alcarde A.R."/>
            <person name="Dietrich F.S."/>
            <person name="McCusker J.H."/>
            <person name="Petes T.D."/>
            <person name="Pereira G.A.G."/>
        </authorList>
    </citation>
    <scope>NUCLEOTIDE SEQUENCE [LARGE SCALE GENOMIC DNA]</scope>
    <source>
        <strain>JAY291</strain>
    </source>
</reference>
<organism>
    <name type="scientific">Saccharomyces cerevisiae (strain JAY291)</name>
    <name type="common">Baker's yeast</name>
    <dbReference type="NCBI Taxonomy" id="574961"/>
    <lineage>
        <taxon>Eukaryota</taxon>
        <taxon>Fungi</taxon>
        <taxon>Dikarya</taxon>
        <taxon>Ascomycota</taxon>
        <taxon>Saccharomycotina</taxon>
        <taxon>Saccharomycetes</taxon>
        <taxon>Saccharomycetales</taxon>
        <taxon>Saccharomycetaceae</taxon>
        <taxon>Saccharomyces</taxon>
    </lineage>
</organism>
<evidence type="ECO:0000250" key="1"/>
<evidence type="ECO:0000250" key="2">
    <source>
        <dbReference type="UniProtKB" id="P09620"/>
    </source>
</evidence>
<evidence type="ECO:0000255" key="3"/>
<evidence type="ECO:0000256" key="4">
    <source>
        <dbReference type="SAM" id="MobiDB-lite"/>
    </source>
</evidence>
<evidence type="ECO:0000305" key="5"/>
<protein>
    <recommendedName>
        <fullName>Pheromone-processing carboxypeptidase KEX1</fullName>
        <ecNumber>3.4.16.6</ecNumber>
    </recommendedName>
    <alternativeName>
        <fullName>Carboxypeptidase D</fullName>
    </alternativeName>
    <alternativeName>
        <fullName>Killer expression defective protein 1</fullName>
    </alternativeName>
</protein>
<gene>
    <name type="primary">KEX1</name>
    <name type="ORF">C1Q_05019</name>
</gene>
<sequence>MFYNRWLGTWLAMSALIRISVSLPSSEEYKVAYELLPGLSEVPDPSNIPQMHAGHIPLRSEDADEQDNSDLEYFFWKFTNNDSNGNVDRPLIIWLNGGPGCSSMDGALVESGPFRVNSDGKLYLNEGSWISKGDLLFIDQPTGTGFSVEQNKDEGKIDKNKFDEDLEDVTKHFMDFLENYFKIFPEDLTRKIILSGESYAGQYIPFFANAILNHNKFSKIDGDTYDLKALLIGNGWIDPNTQSLSYLPFAMEKKLIDESNPNFKHLTNAHENCQNLINSASTDEAAHFSYQECENILNLLLSYTRESSQKGTADCLNMYNFNLKDSYPSCGMNWPKDVSFVSKFFSTPGVIDSLHLDSDKIDHWKECTNSVGTKLSNPISKPSIHLLPGLLESGIEIVLFNGDKDLICNNKGVLDTIDNLKWGGIKGFSDDAVSFDWIHKSKSTDDSEEFSGYVKYDRNLTFVSVYNASHMVPFDKSLVSRGIVDIYSNDVMIIDNNGKNVMITTDDDSDQDATTESGDKPKENLEEEEQEAQNEEGKEKEGNKDKDGDDDNDNDDDDEDDHNSEGDDDDDDDDDDDDDDDDDEDDNNEKQSNQGLEDSRHKSSEYEQEEEEVEEFAEEISMYKHKAVVVTIVTFLIVVLGVYAYDRRVRRKARHTILVDPNNRQHDSPNKTVSWADDLESGLGAEDDLEQDEQLEGGAPISSTSNKAGSKLKTKKKKKYTSLPNTEIDESFEMTDF</sequence>
<feature type="signal peptide" evidence="3">
    <location>
        <begin position="1"/>
        <end position="22"/>
    </location>
</feature>
<feature type="chain" id="PRO_0000411954" description="Pheromone-processing carboxypeptidase KEX1">
    <location>
        <begin position="23"/>
        <end position="737"/>
    </location>
</feature>
<feature type="topological domain" description="Lumenal" evidence="3">
    <location>
        <begin position="23"/>
        <end position="624"/>
    </location>
</feature>
<feature type="transmembrane region" description="Helical" evidence="3">
    <location>
        <begin position="625"/>
        <end position="645"/>
    </location>
</feature>
<feature type="topological domain" description="Cytoplasmic" evidence="3">
    <location>
        <begin position="646"/>
        <end position="737"/>
    </location>
</feature>
<feature type="region of interest" description="Disordered" evidence="4">
    <location>
        <begin position="502"/>
        <end position="611"/>
    </location>
</feature>
<feature type="region of interest" description="Disordered" evidence="4">
    <location>
        <begin position="682"/>
        <end position="737"/>
    </location>
</feature>
<feature type="compositionally biased region" description="Acidic residues" evidence="4">
    <location>
        <begin position="525"/>
        <end position="534"/>
    </location>
</feature>
<feature type="compositionally biased region" description="Basic and acidic residues" evidence="4">
    <location>
        <begin position="535"/>
        <end position="547"/>
    </location>
</feature>
<feature type="compositionally biased region" description="Acidic residues" evidence="4">
    <location>
        <begin position="548"/>
        <end position="587"/>
    </location>
</feature>
<feature type="compositionally biased region" description="Acidic residues" evidence="4">
    <location>
        <begin position="682"/>
        <end position="695"/>
    </location>
</feature>
<feature type="compositionally biased region" description="Basic residues" evidence="4">
    <location>
        <begin position="710"/>
        <end position="720"/>
    </location>
</feature>
<feature type="compositionally biased region" description="Acidic residues" evidence="4">
    <location>
        <begin position="727"/>
        <end position="737"/>
    </location>
</feature>
<feature type="active site" evidence="1">
    <location>
        <position position="198"/>
    </location>
</feature>
<feature type="active site" evidence="1">
    <location>
        <position position="405"/>
    </location>
</feature>
<feature type="active site" evidence="1">
    <location>
        <position position="470"/>
    </location>
</feature>
<feature type="modified residue" description="Phosphoserine" evidence="2">
    <location>
        <position position="668"/>
    </location>
</feature>
<feature type="glycosylation site" description="N-linked (GlcNAc...) asparagine" evidence="3">
    <location>
        <position position="81"/>
    </location>
</feature>
<feature type="glycosylation site" description="N-linked (GlcNAc...) asparagine" evidence="3">
    <location>
        <position position="459"/>
    </location>
</feature>
<feature type="glycosylation site" description="N-linked (GlcNAc...) asparagine" evidence="3">
    <location>
        <position position="467"/>
    </location>
</feature>